<sequence>MEGPRLTALMLLLLLTLAADRASAKGEKSLEYKIRDDPDLSQFYSWLEHNEVANSTLQLRQVTVFAPTNLAFQNYKARDGDENIILYHMTNLAHSLDQLGHKVLSELDGNPPLWITRRRDTIFVNNARVLTERSNYEAVNRHGKKQVLHVVDSVLEPVWSTSGQLYNPDAFQFLNQSENLDLGLHRVRSFRQRVFQNQKQNDFKLEGKHTFFIPVDEGFKPLPRPEKIDQKVIDGHIIPNHVLFTSATPLDEEYETLAFTDMLRVVISFTMESDGKAHKPYVKSNTVIGDANHATGAVLAEIVKANIPVKNGVVHLIQRPLMVVDNTVKQFLEGFEKEDGPLYKFYQVILDAGGDFINQITEMKDLTLFAPSNAAWSETTANNLLTDRKKFREILNLHIVAEKLSIESIVEQNVKQVPTMADRKNLYFNVVHGPAGNKTVTVEGGGVNATIVQPNIAATNGMVHIINKILGVPYTTVKEKLRTDPMLNKTYHLGEMSDFNKMLDEKHTKFTYFVPRDLAWKKMEVRDPSAHRKLFMKEFTYQVKQILERHLVISDRVYTMGALKKLASNTSSVLPTMRDHLRLRVRETEKSYYVEWQGEWTHIFRPDVECTNGIIHVMDYVFMKEGDIVVGGPDGAGQQVASFAVVASAHLVVLATVRWLLH</sequence>
<organism>
    <name type="scientific">Schistocerca americana</name>
    <name type="common">American grasshopper</name>
    <dbReference type="NCBI Taxonomy" id="7009"/>
    <lineage>
        <taxon>Eukaryota</taxon>
        <taxon>Metazoa</taxon>
        <taxon>Ecdysozoa</taxon>
        <taxon>Arthropoda</taxon>
        <taxon>Hexapoda</taxon>
        <taxon>Insecta</taxon>
        <taxon>Pterygota</taxon>
        <taxon>Neoptera</taxon>
        <taxon>Polyneoptera</taxon>
        <taxon>Orthoptera</taxon>
        <taxon>Caelifera</taxon>
        <taxon>Acrididea</taxon>
        <taxon>Acridomorpha</taxon>
        <taxon>Acridoidea</taxon>
        <taxon>Acrididae</taxon>
        <taxon>Cyrtacanthacridinae</taxon>
        <taxon>Schistocerca</taxon>
    </lineage>
</organism>
<accession>P10675</accession>
<gene>
    <name type="primary">FAS1</name>
</gene>
<feature type="signal peptide" evidence="3">
    <location>
        <begin position="1"/>
        <end position="24"/>
    </location>
</feature>
<feature type="chain" id="PRO_0000008774" description="Fasciclin-1">
    <location>
        <begin position="25"/>
        <end position="631"/>
    </location>
</feature>
<feature type="propeptide" id="PRO_0000008775" description="Removed in mature form" evidence="1">
    <location>
        <begin position="632"/>
        <end position="662"/>
    </location>
</feature>
<feature type="domain" description="FAS1 1" evidence="2">
    <location>
        <begin position="27"/>
        <end position="155"/>
    </location>
</feature>
<feature type="domain" description="FAS1 2" evidence="2">
    <location>
        <begin position="167"/>
        <end position="321"/>
    </location>
</feature>
<feature type="domain" description="FAS1 3" evidence="2">
    <location>
        <begin position="329"/>
        <end position="470"/>
    </location>
</feature>
<feature type="domain" description="FAS1 4" evidence="2">
    <location>
        <begin position="474"/>
        <end position="622"/>
    </location>
</feature>
<feature type="lipid moiety-binding region" description="GPI-anchor amidated glycine" evidence="1">
    <location>
        <position position="631"/>
    </location>
</feature>
<feature type="glycosylation site" description="N-linked (GlcNAc...) asparagine" evidence="1">
    <location>
        <position position="54"/>
    </location>
</feature>
<feature type="glycosylation site" description="N-linked (GlcNAc...) asparagine" evidence="1">
    <location>
        <position position="175"/>
    </location>
</feature>
<feature type="glycosylation site" description="N-linked (GlcNAc...) asparagine" evidence="1">
    <location>
        <position position="437"/>
    </location>
</feature>
<feature type="glycosylation site" description="N-linked (GlcNAc...) asparagine" evidence="1">
    <location>
        <position position="448"/>
    </location>
</feature>
<feature type="glycosylation site" description="N-linked (GlcNAc...) asparagine" evidence="1">
    <location>
        <position position="488"/>
    </location>
</feature>
<feature type="glycosylation site" description="N-linked (GlcNAc...) asparagine" evidence="1">
    <location>
        <position position="569"/>
    </location>
</feature>
<dbReference type="EMBL" id="M20544">
    <property type="protein sequence ID" value="AAA29809.1"/>
    <property type="molecule type" value="mRNA"/>
</dbReference>
<dbReference type="PIR" id="A29900">
    <property type="entry name" value="A29900"/>
</dbReference>
<dbReference type="SMR" id="P10675"/>
<dbReference type="GlyCosmos" id="P10675">
    <property type="glycosylation" value="6 sites, No reported glycans"/>
</dbReference>
<dbReference type="OrthoDB" id="7700931at2759"/>
<dbReference type="GO" id="GO:0005615">
    <property type="term" value="C:extracellular space"/>
    <property type="evidence" value="ECO:0007669"/>
    <property type="project" value="TreeGrafter"/>
</dbReference>
<dbReference type="GO" id="GO:0005886">
    <property type="term" value="C:plasma membrane"/>
    <property type="evidence" value="ECO:0007669"/>
    <property type="project" value="UniProtKB-SubCell"/>
</dbReference>
<dbReference type="GO" id="GO:0098552">
    <property type="term" value="C:side of membrane"/>
    <property type="evidence" value="ECO:0007669"/>
    <property type="project" value="UniProtKB-KW"/>
</dbReference>
<dbReference type="GO" id="GO:0007155">
    <property type="term" value="P:cell adhesion"/>
    <property type="evidence" value="ECO:0007669"/>
    <property type="project" value="UniProtKB-KW"/>
</dbReference>
<dbReference type="Gene3D" id="2.30.180.10">
    <property type="entry name" value="FAS1 domain"/>
    <property type="match status" value="4"/>
</dbReference>
<dbReference type="InterPro" id="IPR050904">
    <property type="entry name" value="Adhesion/Biosynth-related"/>
</dbReference>
<dbReference type="InterPro" id="IPR036378">
    <property type="entry name" value="FAS1_dom_sf"/>
</dbReference>
<dbReference type="InterPro" id="IPR000782">
    <property type="entry name" value="FAS1_domain"/>
</dbReference>
<dbReference type="PANTHER" id="PTHR10900:SF77">
    <property type="entry name" value="FI19380P1"/>
    <property type="match status" value="1"/>
</dbReference>
<dbReference type="PANTHER" id="PTHR10900">
    <property type="entry name" value="PERIOSTIN-RELATED"/>
    <property type="match status" value="1"/>
</dbReference>
<dbReference type="Pfam" id="PF02469">
    <property type="entry name" value="Fasciclin"/>
    <property type="match status" value="4"/>
</dbReference>
<dbReference type="SMART" id="SM00554">
    <property type="entry name" value="FAS1"/>
    <property type="match status" value="4"/>
</dbReference>
<dbReference type="SUPFAM" id="SSF82153">
    <property type="entry name" value="FAS1 domain"/>
    <property type="match status" value="4"/>
</dbReference>
<dbReference type="PROSITE" id="PS50213">
    <property type="entry name" value="FAS1"/>
    <property type="match status" value="4"/>
</dbReference>
<proteinExistence type="evidence at protein level"/>
<comment type="function">
    <text>Neural cell adhesion molecule.</text>
</comment>
<comment type="subcellular location">
    <subcellularLocation>
        <location>Cell membrane</location>
        <topology>Lipid-anchor</topology>
        <topology>GPI-anchor</topology>
    </subcellularLocation>
</comment>
<comment type="tissue specificity">
    <text>Expressed on different subsets of axon bundles (fascicles) in insect embryos.</text>
</comment>
<name>FAS1_SCHAM</name>
<evidence type="ECO:0000255" key="1"/>
<evidence type="ECO:0000255" key="2">
    <source>
        <dbReference type="PROSITE-ProRule" id="PRU00082"/>
    </source>
</evidence>
<evidence type="ECO:0000269" key="3">
    <source>
    </source>
</evidence>
<reference key="1">
    <citation type="journal article" date="1988" name="Cell">
        <title>Sequence analysis and neuronal expression of fasciclin I in grasshopper and Drosophila.</title>
        <authorList>
            <person name="Zinn K."/>
            <person name="McAllister L."/>
            <person name="Goodman C."/>
        </authorList>
    </citation>
    <scope>NUCLEOTIDE SEQUENCE [MRNA]</scope>
</reference>
<reference key="2">
    <citation type="journal article" date="1988" name="Proc. Natl. Acad. Sci. U.S.A.">
        <title>Characterization and cloning of fasciclin I and fasciclin II glycoproteins in the grasshopper.</title>
        <authorList>
            <person name="Snow P.M."/>
            <person name="Zinn K."/>
            <person name="Harrelson A.L."/>
            <person name="McAllister L."/>
            <person name="Schilling J."/>
            <person name="Bastiani M.J."/>
            <person name="Makk G."/>
            <person name="Goodman C.S."/>
        </authorList>
    </citation>
    <scope>PROTEIN SEQUENCE OF 25-42</scope>
</reference>
<protein>
    <recommendedName>
        <fullName>Fasciclin-1</fullName>
    </recommendedName>
    <alternativeName>
        <fullName>Fasciclin I</fullName>
        <shortName>FAS I</shortName>
        <shortName>FCN</shortName>
    </alternativeName>
</protein>
<keyword id="KW-0130">Cell adhesion</keyword>
<keyword id="KW-1003">Cell membrane</keyword>
<keyword id="KW-0903">Direct protein sequencing</keyword>
<keyword id="KW-0325">Glycoprotein</keyword>
<keyword id="KW-0336">GPI-anchor</keyword>
<keyword id="KW-0449">Lipoprotein</keyword>
<keyword id="KW-0472">Membrane</keyword>
<keyword id="KW-0677">Repeat</keyword>
<keyword id="KW-0732">Signal</keyword>